<sequence>MHGTCLSGLYPVPFTHKAHDYPHFNIYISFSGPKYCITALNTCVIPLLHHILTTQCITLMLILQKIQHQNHLNIKIIIFQLYKINILTCGHYPLNSIPFTVT</sequence>
<name>YM9D_YEAST</name>
<proteinExistence type="uncertain"/>
<evidence type="ECO:0000305" key="1"/>
<evidence type="ECO:0000305" key="2">
    <source>
    </source>
</evidence>
<gene>
    <name type="ordered locus">YMR326C</name>
</gene>
<reference key="1">
    <citation type="journal article" date="1997" name="Nature">
        <title>The nucleotide sequence of Saccharomyces cerevisiae chromosome XIII.</title>
        <authorList>
            <person name="Bowman S."/>
            <person name="Churcher C.M."/>
            <person name="Badcock K."/>
            <person name="Brown D."/>
            <person name="Chillingworth T."/>
            <person name="Connor R."/>
            <person name="Dedman K."/>
            <person name="Devlin K."/>
            <person name="Gentles S."/>
            <person name="Hamlin N."/>
            <person name="Hunt S."/>
            <person name="Jagels K."/>
            <person name="Lye G."/>
            <person name="Moule S."/>
            <person name="Odell C."/>
            <person name="Pearson D."/>
            <person name="Rajandream M.A."/>
            <person name="Rice P."/>
            <person name="Skelton J."/>
            <person name="Walsh S.V."/>
            <person name="Whitehead S."/>
            <person name="Barrell B.G."/>
        </authorList>
    </citation>
    <scope>NUCLEOTIDE SEQUENCE [LARGE SCALE GENOMIC DNA]</scope>
    <source>
        <strain>ATCC 204508 / S288c</strain>
    </source>
</reference>
<reference key="2">
    <citation type="journal article" date="2014" name="G3 (Bethesda)">
        <title>The reference genome sequence of Saccharomyces cerevisiae: Then and now.</title>
        <authorList>
            <person name="Engel S.R."/>
            <person name="Dietrich F.S."/>
            <person name="Fisk D.G."/>
            <person name="Binkley G."/>
            <person name="Balakrishnan R."/>
            <person name="Costanzo M.C."/>
            <person name="Dwight S.S."/>
            <person name="Hitz B.C."/>
            <person name="Karra K."/>
            <person name="Nash R.S."/>
            <person name="Weng S."/>
            <person name="Wong E.D."/>
            <person name="Lloyd P."/>
            <person name="Skrzypek M.S."/>
            <person name="Miyasato S.R."/>
            <person name="Simison M."/>
            <person name="Cherry J.M."/>
        </authorList>
    </citation>
    <scope>GENOME REANNOTATION</scope>
    <source>
        <strain>ATCC 204508 / S288c</strain>
    </source>
</reference>
<reference key="3">
    <citation type="journal article" date="2007" name="Genome Res.">
        <title>Approaching a complete repository of sequence-verified protein-encoding clones for Saccharomyces cerevisiae.</title>
        <authorList>
            <person name="Hu Y."/>
            <person name="Rolfs A."/>
            <person name="Bhullar B."/>
            <person name="Murthy T.V.S."/>
            <person name="Zhu C."/>
            <person name="Berger M.F."/>
            <person name="Camargo A.A."/>
            <person name="Kelley F."/>
            <person name="McCarron S."/>
            <person name="Jepson D."/>
            <person name="Richardson A."/>
            <person name="Raphael J."/>
            <person name="Moreira D."/>
            <person name="Taycher E."/>
            <person name="Zuo D."/>
            <person name="Mohr S."/>
            <person name="Kane M.F."/>
            <person name="Williamson J."/>
            <person name="Simpson A.J.G."/>
            <person name="Bulyk M.L."/>
            <person name="Harlow E."/>
            <person name="Marsischky G."/>
            <person name="Kolodner R.D."/>
            <person name="LaBaer J."/>
        </authorList>
    </citation>
    <scope>NUCLEOTIDE SEQUENCE [GENOMIC DNA]</scope>
    <source>
        <strain>ATCC 204508 / S288c</strain>
    </source>
</reference>
<organism>
    <name type="scientific">Saccharomyces cerevisiae (strain ATCC 204508 / S288c)</name>
    <name type="common">Baker's yeast</name>
    <dbReference type="NCBI Taxonomy" id="559292"/>
    <lineage>
        <taxon>Eukaryota</taxon>
        <taxon>Fungi</taxon>
        <taxon>Dikarya</taxon>
        <taxon>Ascomycota</taxon>
        <taxon>Saccharomycotina</taxon>
        <taxon>Saccharomycetes</taxon>
        <taxon>Saccharomycetales</taxon>
        <taxon>Saccharomycetaceae</taxon>
        <taxon>Saccharomyces</taxon>
    </lineage>
</organism>
<protein>
    <recommendedName>
        <fullName>Putative UPF0320 protein YMR326C</fullName>
    </recommendedName>
</protein>
<feature type="chain" id="PRO_0000211375" description="Putative UPF0320 protein YMR326C">
    <location>
        <begin position="1"/>
        <end position="102"/>
    </location>
</feature>
<feature type="sequence conflict" description="In Ref. 3; AAT93382." evidence="1" ref="3">
    <original>F</original>
    <variation>Y</variation>
    <location>
        <position position="99"/>
    </location>
</feature>
<comment type="miscellaneous">
    <text evidence="1">Contained within a telomeric X element core sequence.</text>
</comment>
<comment type="similarity">
    <text evidence="1">Belongs to the UPF0320 family.</text>
</comment>
<comment type="caution">
    <text evidence="2">Product of a dubious gene prediction unlikely to encode a functional protein. Because of that it is not part of the S.cerevisiae S288c complete/reference proteome set.</text>
</comment>
<accession>Q6B0R7</accession>
<accession>A2P2M9</accession>
<dbReference type="EMBL" id="Z54141">
    <property type="protein sequence ID" value="CAA90844.1"/>
    <property type="molecule type" value="Genomic_DNA"/>
</dbReference>
<dbReference type="EMBL" id="AY693363">
    <property type="protein sequence ID" value="AAT93382.1"/>
    <property type="molecule type" value="Genomic_DNA"/>
</dbReference>
<dbReference type="STRING" id="4932.YMR326C"/>
<dbReference type="PaxDb" id="4932-YMR326C"/>
<dbReference type="EnsemblFungi" id="YMR326C_mRNA">
    <property type="protein sequence ID" value="YMR326C"/>
    <property type="gene ID" value="YMR326C"/>
</dbReference>
<dbReference type="AGR" id="SGD:S000004945"/>
<dbReference type="SGD" id="S000004945">
    <property type="gene designation" value="YMR326C"/>
</dbReference>
<dbReference type="GeneTree" id="ENSGT00940000177535"/>
<dbReference type="HOGENOM" id="CLU_2279676_0_0_1"/>
<dbReference type="InterPro" id="IPR007414">
    <property type="entry name" value="DUF468"/>
</dbReference>
<dbReference type="Pfam" id="PF04318">
    <property type="entry name" value="DUF468"/>
    <property type="match status" value="1"/>
</dbReference>